<dbReference type="EMBL" id="DQ256410">
    <property type="protein sequence ID" value="ABB71823.2"/>
    <property type="molecule type" value="mRNA"/>
</dbReference>
<dbReference type="RefSeq" id="NP_001038003.1">
    <property type="nucleotide sequence ID" value="NM_001044538.2"/>
</dbReference>
<dbReference type="SMR" id="Q2XSV9"/>
<dbReference type="FunCoup" id="Q2XSV9">
    <property type="interactions" value="617"/>
</dbReference>
<dbReference type="STRING" id="9823.ENSSSCP00000019751"/>
<dbReference type="PaxDb" id="9823-ENSSSCP00000019751"/>
<dbReference type="PeptideAtlas" id="Q2XSV9"/>
<dbReference type="GeneID" id="733588"/>
<dbReference type="KEGG" id="ssc:733588"/>
<dbReference type="CTD" id="2767"/>
<dbReference type="eggNOG" id="KOG0085">
    <property type="taxonomic scope" value="Eukaryota"/>
</dbReference>
<dbReference type="InParanoid" id="Q2XSV9"/>
<dbReference type="OrthoDB" id="5817230at2759"/>
<dbReference type="Proteomes" id="UP000008227">
    <property type="component" value="Unplaced"/>
</dbReference>
<dbReference type="Proteomes" id="UP000314985">
    <property type="component" value="Unplaced"/>
</dbReference>
<dbReference type="Proteomes" id="UP000694570">
    <property type="component" value="Unplaced"/>
</dbReference>
<dbReference type="Proteomes" id="UP000694571">
    <property type="component" value="Unplaced"/>
</dbReference>
<dbReference type="Proteomes" id="UP000694720">
    <property type="component" value="Unplaced"/>
</dbReference>
<dbReference type="Proteomes" id="UP000694722">
    <property type="component" value="Unplaced"/>
</dbReference>
<dbReference type="Proteomes" id="UP000694723">
    <property type="component" value="Unplaced"/>
</dbReference>
<dbReference type="Proteomes" id="UP000694724">
    <property type="component" value="Unplaced"/>
</dbReference>
<dbReference type="Proteomes" id="UP000694725">
    <property type="component" value="Unplaced"/>
</dbReference>
<dbReference type="Proteomes" id="UP000694726">
    <property type="component" value="Unplaced"/>
</dbReference>
<dbReference type="Proteomes" id="UP000694727">
    <property type="component" value="Unplaced"/>
</dbReference>
<dbReference type="Proteomes" id="UP000694728">
    <property type="component" value="Unplaced"/>
</dbReference>
<dbReference type="GO" id="GO:0005737">
    <property type="term" value="C:cytoplasm"/>
    <property type="evidence" value="ECO:0000250"/>
    <property type="project" value="UniProtKB"/>
</dbReference>
<dbReference type="GO" id="GO:0005834">
    <property type="term" value="C:heterotrimeric G-protein complex"/>
    <property type="evidence" value="ECO:0000318"/>
    <property type="project" value="GO_Central"/>
</dbReference>
<dbReference type="GO" id="GO:0016020">
    <property type="term" value="C:membrane"/>
    <property type="evidence" value="ECO:0000250"/>
    <property type="project" value="AgBase"/>
</dbReference>
<dbReference type="GO" id="GO:0001750">
    <property type="term" value="C:photoreceptor outer segment"/>
    <property type="evidence" value="ECO:0000250"/>
    <property type="project" value="AgBase"/>
</dbReference>
<dbReference type="GO" id="GO:0045202">
    <property type="term" value="C:synapse"/>
    <property type="evidence" value="ECO:0007669"/>
    <property type="project" value="GOC"/>
</dbReference>
<dbReference type="GO" id="GO:0001664">
    <property type="term" value="F:G protein-coupled receptor binding"/>
    <property type="evidence" value="ECO:0000318"/>
    <property type="project" value="GO_Central"/>
</dbReference>
<dbReference type="GO" id="GO:0031683">
    <property type="term" value="F:G-protein beta/gamma-subunit complex binding"/>
    <property type="evidence" value="ECO:0000318"/>
    <property type="project" value="GO_Central"/>
</dbReference>
<dbReference type="GO" id="GO:0005525">
    <property type="term" value="F:GTP binding"/>
    <property type="evidence" value="ECO:0007669"/>
    <property type="project" value="UniProtKB-KW"/>
</dbReference>
<dbReference type="GO" id="GO:0003924">
    <property type="term" value="F:GTPase activity"/>
    <property type="evidence" value="ECO:0000318"/>
    <property type="project" value="GO_Central"/>
</dbReference>
<dbReference type="GO" id="GO:0046872">
    <property type="term" value="F:metal ion binding"/>
    <property type="evidence" value="ECO:0007669"/>
    <property type="project" value="UniProtKB-KW"/>
</dbReference>
<dbReference type="GO" id="GO:0001508">
    <property type="term" value="P:action potential"/>
    <property type="evidence" value="ECO:0000318"/>
    <property type="project" value="GO_Central"/>
</dbReference>
<dbReference type="GO" id="GO:0007188">
    <property type="term" value="P:adenylate cyclase-modulating G protein-coupled receptor signaling pathway"/>
    <property type="evidence" value="ECO:0000318"/>
    <property type="project" value="GO_Central"/>
</dbReference>
<dbReference type="GO" id="GO:0009649">
    <property type="term" value="P:entrainment of circadian clock"/>
    <property type="evidence" value="ECO:0000250"/>
    <property type="project" value="AgBase"/>
</dbReference>
<dbReference type="GO" id="GO:0007213">
    <property type="term" value="P:G protein-coupled acetylcholine receptor signaling pathway"/>
    <property type="evidence" value="ECO:0000250"/>
    <property type="project" value="AgBase"/>
</dbReference>
<dbReference type="GO" id="GO:0060158">
    <property type="term" value="P:phospholipase C-activating dopamine receptor signaling pathway"/>
    <property type="evidence" value="ECO:0000318"/>
    <property type="project" value="GO_Central"/>
</dbReference>
<dbReference type="GO" id="GO:0007603">
    <property type="term" value="P:phototransduction, visible light"/>
    <property type="evidence" value="ECO:0000250"/>
    <property type="project" value="AgBase"/>
</dbReference>
<dbReference type="CDD" id="cd00066">
    <property type="entry name" value="G-alpha"/>
    <property type="match status" value="1"/>
</dbReference>
<dbReference type="FunFam" id="3.40.50.300:FF:003977">
    <property type="entry name" value="Guanine nucleotide-binding protein G(q) subunit alpha"/>
    <property type="match status" value="1"/>
</dbReference>
<dbReference type="FunFam" id="1.10.400.10:FF:000002">
    <property type="entry name" value="guanine nucleotide-binding protein G(Q) subunit alpha"/>
    <property type="match status" value="1"/>
</dbReference>
<dbReference type="FunFam" id="3.40.50.300:FF:000692">
    <property type="entry name" value="Guanine nucleotide-binding protein subunit alpha"/>
    <property type="match status" value="1"/>
</dbReference>
<dbReference type="Gene3D" id="1.10.400.10">
    <property type="entry name" value="GI Alpha 1, domain 2-like"/>
    <property type="match status" value="1"/>
</dbReference>
<dbReference type="Gene3D" id="3.40.50.300">
    <property type="entry name" value="P-loop containing nucleotide triphosphate hydrolases"/>
    <property type="match status" value="1"/>
</dbReference>
<dbReference type="InterPro" id="IPR000654">
    <property type="entry name" value="Gprotein_alpha_Q"/>
</dbReference>
<dbReference type="InterPro" id="IPR001019">
    <property type="entry name" value="Gprotein_alpha_su"/>
</dbReference>
<dbReference type="InterPro" id="IPR011025">
    <property type="entry name" value="GproteinA_insert"/>
</dbReference>
<dbReference type="InterPro" id="IPR027417">
    <property type="entry name" value="P-loop_NTPase"/>
</dbReference>
<dbReference type="PANTHER" id="PTHR10218">
    <property type="entry name" value="GTP-BINDING PROTEIN ALPHA SUBUNIT"/>
    <property type="match status" value="1"/>
</dbReference>
<dbReference type="PANTHER" id="PTHR10218:SF328">
    <property type="entry name" value="GUANINE NUCLEOTIDE-BINDING PROTEIN SUBUNIT ALPHA-11"/>
    <property type="match status" value="1"/>
</dbReference>
<dbReference type="Pfam" id="PF00503">
    <property type="entry name" value="G-alpha"/>
    <property type="match status" value="1"/>
</dbReference>
<dbReference type="PRINTS" id="PR00318">
    <property type="entry name" value="GPROTEINA"/>
</dbReference>
<dbReference type="PRINTS" id="PR00442">
    <property type="entry name" value="GPROTEINAQ"/>
</dbReference>
<dbReference type="SMART" id="SM00275">
    <property type="entry name" value="G_alpha"/>
    <property type="match status" value="1"/>
</dbReference>
<dbReference type="SUPFAM" id="SSF52540">
    <property type="entry name" value="P-loop containing nucleoside triphosphate hydrolases"/>
    <property type="match status" value="1"/>
</dbReference>
<dbReference type="SUPFAM" id="SSF47895">
    <property type="entry name" value="Transducin (alpha subunit), insertion domain"/>
    <property type="match status" value="1"/>
</dbReference>
<dbReference type="PROSITE" id="PS51882">
    <property type="entry name" value="G_ALPHA"/>
    <property type="match status" value="1"/>
</dbReference>
<keyword id="KW-1003">Cell membrane</keyword>
<keyword id="KW-0963">Cytoplasm</keyword>
<keyword id="KW-0342">GTP-binding</keyword>
<keyword id="KW-0378">Hydrolase</keyword>
<keyword id="KW-0449">Lipoprotein</keyword>
<keyword id="KW-0460">Magnesium</keyword>
<keyword id="KW-0472">Membrane</keyword>
<keyword id="KW-0479">Metal-binding</keyword>
<keyword id="KW-0547">Nucleotide-binding</keyword>
<keyword id="KW-0564">Palmitate</keyword>
<keyword id="KW-1185">Reference proteome</keyword>
<keyword id="KW-0807">Transducer</keyword>
<name>GNA11_PIG</name>
<protein>
    <recommendedName>
        <fullName>Guanine nucleotide-binding protein subunit alpha-11</fullName>
        <shortName>G alpha-11</shortName>
        <shortName>G-protein subunit alpha-11</shortName>
    </recommendedName>
</protein>
<gene>
    <name type="primary">GNA11</name>
</gene>
<accession>Q2XSV9</accession>
<feature type="chain" id="PRO_0000289663" description="Guanine nucleotide-binding protein subunit alpha-11">
    <location>
        <begin position="1"/>
        <end position="359"/>
    </location>
</feature>
<feature type="domain" description="G-alpha" evidence="5">
    <location>
        <begin position="38"/>
        <end position="359"/>
    </location>
</feature>
<feature type="region of interest" description="G1 motif" evidence="5">
    <location>
        <begin position="41"/>
        <end position="54"/>
    </location>
</feature>
<feature type="region of interest" description="G2 motif" evidence="5">
    <location>
        <begin position="178"/>
        <end position="186"/>
    </location>
</feature>
<feature type="region of interest" description="G3 motif" evidence="5">
    <location>
        <begin position="201"/>
        <end position="210"/>
    </location>
</feature>
<feature type="region of interest" description="G4 motif" evidence="5">
    <location>
        <begin position="270"/>
        <end position="277"/>
    </location>
</feature>
<feature type="region of interest" description="G5 motif" evidence="5">
    <location>
        <begin position="329"/>
        <end position="334"/>
    </location>
</feature>
<feature type="binding site" evidence="3">
    <location>
        <begin position="46"/>
        <end position="53"/>
    </location>
    <ligand>
        <name>GTP</name>
        <dbReference type="ChEBI" id="CHEBI:37565"/>
    </ligand>
</feature>
<feature type="binding site" evidence="2">
    <location>
        <position position="53"/>
    </location>
    <ligand>
        <name>Mg(2+)</name>
        <dbReference type="ChEBI" id="CHEBI:18420"/>
    </ligand>
</feature>
<feature type="binding site" evidence="2">
    <location>
        <begin position="180"/>
        <end position="183"/>
    </location>
    <ligand>
        <name>GTP</name>
        <dbReference type="ChEBI" id="CHEBI:37565"/>
    </ligand>
</feature>
<feature type="binding site" evidence="2">
    <location>
        <position position="186"/>
    </location>
    <ligand>
        <name>Mg(2+)</name>
        <dbReference type="ChEBI" id="CHEBI:18420"/>
    </ligand>
</feature>
<feature type="binding site" evidence="2">
    <location>
        <begin position="274"/>
        <end position="277"/>
    </location>
    <ligand>
        <name>GTP</name>
        <dbReference type="ChEBI" id="CHEBI:37565"/>
    </ligand>
</feature>
<feature type="binding site" evidence="2">
    <location>
        <position position="331"/>
    </location>
    <ligand>
        <name>GTP</name>
        <dbReference type="ChEBI" id="CHEBI:37565"/>
    </ligand>
</feature>
<feature type="lipid moiety-binding region" description="S-palmitoyl cysteine" evidence="3">
    <location>
        <position position="9"/>
    </location>
</feature>
<feature type="lipid moiety-binding region" description="S-palmitoyl cysteine" evidence="3">
    <location>
        <position position="10"/>
    </location>
</feature>
<evidence type="ECO:0000250" key="1">
    <source>
        <dbReference type="UniProtKB" id="P21278"/>
    </source>
</evidence>
<evidence type="ECO:0000250" key="2">
    <source>
        <dbReference type="UniProtKB" id="P27600"/>
    </source>
</evidence>
<evidence type="ECO:0000250" key="3">
    <source>
        <dbReference type="UniProtKB" id="P29992"/>
    </source>
</evidence>
<evidence type="ECO:0000250" key="4">
    <source>
        <dbReference type="UniProtKB" id="P50148"/>
    </source>
</evidence>
<evidence type="ECO:0000255" key="5">
    <source>
        <dbReference type="PROSITE-ProRule" id="PRU01230"/>
    </source>
</evidence>
<evidence type="ECO:0000305" key="6"/>
<sequence>MTLESMMACCLSDEVKESKRINAEIEKQLRRDKRDARRELKLLLLGTGESGKSTFIKQMRIIHGAGYSEEDKRGFTKLVYQNIFTAMQAMIRAMETLKILYKYEQNKANALLIREVDVEKVTTFEHRYVSAIKTLWNDPGIQECYDRRREYQLSDSAKYYLTDVDRIATSGYLPTQQDVLRVRVPTTGIIEYPFDLENIIFRMVDVGGQRSERRKWIHCFENVTSIMFLVALSEYDQVLVESDNENRMEESKALFRTIVTYPWFQNSSVILFLNKKDLLEDKILFSHLVDYFPEFDGPQRVAQAAREFILKMFVDLNPDSDKIIYSHFTCATDTENIRFVFAAVKDTILQLNLKEYNLV</sequence>
<reference key="1">
    <citation type="journal article" date="2008" name="Biochem. Genet.">
        <title>Cloning, expression pattern, chromosomal localization, and evolution analysis of Porcine gnaq, gna11, and gna14.</title>
        <authorList>
            <person name="Chen H."/>
            <person name="Yao W."/>
            <person name="Jin D."/>
            <person name="Xia T."/>
            <person name="Chen X."/>
            <person name="Lei T."/>
            <person name="Zhou L."/>
            <person name="Yang Z."/>
        </authorList>
    </citation>
    <scope>NUCLEOTIDE SEQUENCE [MRNA]</scope>
</reference>
<organism>
    <name type="scientific">Sus scrofa</name>
    <name type="common">Pig</name>
    <dbReference type="NCBI Taxonomy" id="9823"/>
    <lineage>
        <taxon>Eukaryota</taxon>
        <taxon>Metazoa</taxon>
        <taxon>Chordata</taxon>
        <taxon>Craniata</taxon>
        <taxon>Vertebrata</taxon>
        <taxon>Euteleostomi</taxon>
        <taxon>Mammalia</taxon>
        <taxon>Eutheria</taxon>
        <taxon>Laurasiatheria</taxon>
        <taxon>Artiodactyla</taxon>
        <taxon>Suina</taxon>
        <taxon>Suidae</taxon>
        <taxon>Sus</taxon>
    </lineage>
</organism>
<comment type="function">
    <text evidence="1 3">Guanine nucleotide-binding proteins (G proteins) function as transducers downstream of G protein-coupled receptors (GPCRs) in numerous signaling cascades. The alpha chain contains the guanine nucleotide binding site and alternates between an active, GTP-bound state and an inactive, GDP-bound state. Signaling by an activated GPCR promotes GDP release and GTP binding. The alpha subunit has a low GTPase activity that converts bound GTP to GDP, thereby terminating the signal. Both GDP release and GTP hydrolysis are modulated by numerous regulatory proteins. Signaling is mediated via phospholipase C-beta-dependent inositol lipid hydrolysis for signal propagation: activates phospholipase C-beta: following GPCR activation, GNA11 activates PLC-beta (PLCB1, PLCB2, PLCB3 or PLCB4), leading to production of diacylglycerol (DAG) and inositol 1,4,5-trisphosphate (IP3). Transduces FFAR4 signaling in response to long-chain fatty acids (LCFAs) (By similarity). Together with GNAQ, required for heart development (By similarity). In the respiratory epithelium, transmits OXGR1-dependent signals that lead to downstream intracellular Ca(2+) release and mucocilliary clearance of airborne pathogens.</text>
</comment>
<comment type="catalytic activity">
    <reaction evidence="4">
        <text>GTP + H2O = GDP + phosphate + H(+)</text>
        <dbReference type="Rhea" id="RHEA:19669"/>
        <dbReference type="ChEBI" id="CHEBI:15377"/>
        <dbReference type="ChEBI" id="CHEBI:15378"/>
        <dbReference type="ChEBI" id="CHEBI:37565"/>
        <dbReference type="ChEBI" id="CHEBI:43474"/>
        <dbReference type="ChEBI" id="CHEBI:58189"/>
    </reaction>
    <physiologicalReaction direction="left-to-right" evidence="4">
        <dbReference type="Rhea" id="RHEA:19670"/>
    </physiologicalReaction>
</comment>
<comment type="subunit">
    <text evidence="3">G proteins are composed of 3 units; alpha, beta and gamma. The alpha chain contains the guanine nucleotide binding site. Interacts with RGS22. Interacts with NTSR1.</text>
</comment>
<comment type="subcellular location">
    <subcellularLocation>
        <location evidence="3">Cell membrane</location>
        <topology evidence="3">Lipid-anchor</topology>
    </subcellularLocation>
    <subcellularLocation>
        <location evidence="3">Cytoplasm</location>
    </subcellularLocation>
</comment>
<comment type="similarity">
    <text evidence="6">Belongs to the G-alpha family. G(q) subfamily.</text>
</comment>
<proteinExistence type="evidence at transcript level"/>